<evidence type="ECO:0000255" key="1">
    <source>
        <dbReference type="HAMAP-Rule" id="MF_00201"/>
    </source>
</evidence>
<gene>
    <name evidence="1" type="primary">recO</name>
    <name type="ordered locus">YPTS_2999</name>
</gene>
<protein>
    <recommendedName>
        <fullName evidence="1">DNA repair protein RecO</fullName>
    </recommendedName>
    <alternativeName>
        <fullName evidence="1">Recombination protein O</fullName>
    </alternativeName>
</protein>
<accession>B2KA45</accession>
<name>RECO_YERPB</name>
<comment type="function">
    <text evidence="1">Involved in DNA repair and RecF pathway recombination.</text>
</comment>
<comment type="similarity">
    <text evidence="1">Belongs to the RecO family.</text>
</comment>
<keyword id="KW-0227">DNA damage</keyword>
<keyword id="KW-0233">DNA recombination</keyword>
<keyword id="KW-0234">DNA repair</keyword>
<organism>
    <name type="scientific">Yersinia pseudotuberculosis serotype IB (strain PB1/+)</name>
    <dbReference type="NCBI Taxonomy" id="502801"/>
    <lineage>
        <taxon>Bacteria</taxon>
        <taxon>Pseudomonadati</taxon>
        <taxon>Pseudomonadota</taxon>
        <taxon>Gammaproteobacteria</taxon>
        <taxon>Enterobacterales</taxon>
        <taxon>Yersiniaceae</taxon>
        <taxon>Yersinia</taxon>
    </lineage>
</organism>
<feature type="chain" id="PRO_1000099432" description="DNA repair protein RecO">
    <location>
        <begin position="1"/>
        <end position="241"/>
    </location>
</feature>
<dbReference type="EMBL" id="CP001048">
    <property type="protein sequence ID" value="ACC89956.1"/>
    <property type="molecule type" value="Genomic_DNA"/>
</dbReference>
<dbReference type="RefSeq" id="WP_002209680.1">
    <property type="nucleotide sequence ID" value="NZ_CP009780.1"/>
</dbReference>
<dbReference type="SMR" id="B2KA45"/>
<dbReference type="GeneID" id="57975971"/>
<dbReference type="KEGG" id="ypb:YPTS_2999"/>
<dbReference type="PATRIC" id="fig|502801.10.peg.2430"/>
<dbReference type="GO" id="GO:0043590">
    <property type="term" value="C:bacterial nucleoid"/>
    <property type="evidence" value="ECO:0007669"/>
    <property type="project" value="TreeGrafter"/>
</dbReference>
<dbReference type="GO" id="GO:0006310">
    <property type="term" value="P:DNA recombination"/>
    <property type="evidence" value="ECO:0007669"/>
    <property type="project" value="UniProtKB-UniRule"/>
</dbReference>
<dbReference type="GO" id="GO:0006302">
    <property type="term" value="P:double-strand break repair"/>
    <property type="evidence" value="ECO:0007669"/>
    <property type="project" value="TreeGrafter"/>
</dbReference>
<dbReference type="Gene3D" id="2.40.50.140">
    <property type="entry name" value="Nucleic acid-binding proteins"/>
    <property type="match status" value="1"/>
</dbReference>
<dbReference type="Gene3D" id="1.20.1440.120">
    <property type="entry name" value="Recombination protein O, C-terminal domain"/>
    <property type="match status" value="1"/>
</dbReference>
<dbReference type="HAMAP" id="MF_00201">
    <property type="entry name" value="RecO"/>
    <property type="match status" value="1"/>
</dbReference>
<dbReference type="InterPro" id="IPR037278">
    <property type="entry name" value="ARFGAP/RecO"/>
</dbReference>
<dbReference type="InterPro" id="IPR022572">
    <property type="entry name" value="DNA_rep/recomb_RecO_N"/>
</dbReference>
<dbReference type="InterPro" id="IPR012340">
    <property type="entry name" value="NA-bd_OB-fold"/>
</dbReference>
<dbReference type="InterPro" id="IPR003717">
    <property type="entry name" value="RecO"/>
</dbReference>
<dbReference type="InterPro" id="IPR042242">
    <property type="entry name" value="RecO_C"/>
</dbReference>
<dbReference type="NCBIfam" id="TIGR00613">
    <property type="entry name" value="reco"/>
    <property type="match status" value="1"/>
</dbReference>
<dbReference type="PANTHER" id="PTHR33991">
    <property type="entry name" value="DNA REPAIR PROTEIN RECO"/>
    <property type="match status" value="1"/>
</dbReference>
<dbReference type="PANTHER" id="PTHR33991:SF1">
    <property type="entry name" value="DNA REPAIR PROTEIN RECO"/>
    <property type="match status" value="1"/>
</dbReference>
<dbReference type="Pfam" id="PF02565">
    <property type="entry name" value="RecO_C"/>
    <property type="match status" value="1"/>
</dbReference>
<dbReference type="Pfam" id="PF11967">
    <property type="entry name" value="RecO_N"/>
    <property type="match status" value="1"/>
</dbReference>
<dbReference type="SUPFAM" id="SSF57863">
    <property type="entry name" value="ArfGap/RecO-like zinc finger"/>
    <property type="match status" value="1"/>
</dbReference>
<dbReference type="SUPFAM" id="SSF50249">
    <property type="entry name" value="Nucleic acid-binding proteins"/>
    <property type="match status" value="1"/>
</dbReference>
<proteinExistence type="inferred from homology"/>
<reference key="1">
    <citation type="submission" date="2008-04" db="EMBL/GenBank/DDBJ databases">
        <title>Complete sequence of Yersinia pseudotuberculosis PB1/+.</title>
        <authorList>
            <person name="Copeland A."/>
            <person name="Lucas S."/>
            <person name="Lapidus A."/>
            <person name="Glavina del Rio T."/>
            <person name="Dalin E."/>
            <person name="Tice H."/>
            <person name="Bruce D."/>
            <person name="Goodwin L."/>
            <person name="Pitluck S."/>
            <person name="Munk A.C."/>
            <person name="Brettin T."/>
            <person name="Detter J.C."/>
            <person name="Han C."/>
            <person name="Tapia R."/>
            <person name="Schmutz J."/>
            <person name="Larimer F."/>
            <person name="Land M."/>
            <person name="Hauser L."/>
            <person name="Challacombe J.F."/>
            <person name="Green L."/>
            <person name="Lindler L.E."/>
            <person name="Nikolich M.P."/>
            <person name="Richardson P."/>
        </authorList>
    </citation>
    <scope>NUCLEOTIDE SEQUENCE [LARGE SCALE GENOMIC DNA]</scope>
    <source>
        <strain>PB1/+</strain>
    </source>
</reference>
<sequence length="241" mass="26934">MDGWQRAFVLHGRPYSETSLMLDLFTEGEGRMRVLAKGARGRRSNLKGCLQPFTPLLVRWSGRGEVKTLRSAEPVSLALPLSGSMLYSGLYVNELLSRVLEHQTSYSALFFDYLHCLQALAGSDGSPEHALRQFELAMLANLGYGVDFLHCAGSGQPVSDTMTYRYREEKGFIASLVVDHYSFTGRQLLALANREFPDADTLRAAKRFTRIALKPYLGGKPLKSRELFRQFVIKPPADPSP</sequence>